<feature type="chain" id="PRO_1000096143" description="Elongation factor P">
    <location>
        <begin position="1"/>
        <end position="188"/>
    </location>
</feature>
<feature type="modified residue" description="N6-(3,6-diaminohexanoyl)-5-hydroxylysine" evidence="1">
    <location>
        <position position="34"/>
    </location>
</feature>
<comment type="function">
    <text evidence="1">Involved in peptide bond synthesis. Alleviates ribosome stalling that occurs when 3 or more consecutive Pro residues or the sequence PPG is present in a protein, possibly by augmenting the peptidyl transferase activity of the ribosome. Modification of Lys-34 is required for alleviation.</text>
</comment>
<comment type="pathway">
    <text evidence="1">Protein biosynthesis; polypeptide chain elongation.</text>
</comment>
<comment type="subcellular location">
    <subcellularLocation>
        <location evidence="1">Cytoplasm</location>
    </subcellularLocation>
</comment>
<comment type="PTM">
    <text evidence="1">May be beta-lysylated on the epsilon-amino group of Lys-34 by the combined action of EpmA and EpmB, and then hydroxylated on the C5 position of the same residue by EpmC (if this protein is present). Lysylation is critical for the stimulatory effect of EF-P on peptide-bond formation. The lysylation moiety may extend toward the peptidyltransferase center and stabilize the terminal 3-CCA end of the tRNA. Hydroxylation of the C5 position on Lys-34 may allow additional potential stabilizing hydrogen-bond interactions with the P-tRNA.</text>
</comment>
<comment type="similarity">
    <text evidence="1">Belongs to the elongation factor P family.</text>
</comment>
<reference key="1">
    <citation type="journal article" date="2009" name="Infect. Immun.">
        <title>Comparative genomics reveal extensive transposon-mediated genomic plasticity and diversity among potential effector proteins within the genus Coxiella.</title>
        <authorList>
            <person name="Beare P.A."/>
            <person name="Unsworth N."/>
            <person name="Andoh M."/>
            <person name="Voth D.E."/>
            <person name="Omsland A."/>
            <person name="Gilk S.D."/>
            <person name="Williams K.P."/>
            <person name="Sobral B.W."/>
            <person name="Kupko J.J. III"/>
            <person name="Porcella S.F."/>
            <person name="Samuel J.E."/>
            <person name="Heinzen R.A."/>
        </authorList>
    </citation>
    <scope>NUCLEOTIDE SEQUENCE [LARGE SCALE GENOMIC DNA]</scope>
    <source>
        <strain>CbuG_Q212</strain>
    </source>
</reference>
<organism>
    <name type="scientific">Coxiella burnetii (strain CbuG_Q212)</name>
    <name type="common">Coxiella burnetii (strain Q212)</name>
    <dbReference type="NCBI Taxonomy" id="434923"/>
    <lineage>
        <taxon>Bacteria</taxon>
        <taxon>Pseudomonadati</taxon>
        <taxon>Pseudomonadota</taxon>
        <taxon>Gammaproteobacteria</taxon>
        <taxon>Legionellales</taxon>
        <taxon>Coxiellaceae</taxon>
        <taxon>Coxiella</taxon>
    </lineage>
</organism>
<name>EFP_COXB2</name>
<dbReference type="EMBL" id="CP001019">
    <property type="protein sequence ID" value="ACJ17637.1"/>
    <property type="molecule type" value="Genomic_DNA"/>
</dbReference>
<dbReference type="RefSeq" id="WP_005772139.1">
    <property type="nucleotide sequence ID" value="NC_011527.1"/>
</dbReference>
<dbReference type="SMR" id="B6J307"/>
<dbReference type="KEGG" id="cbg:CbuG_0189"/>
<dbReference type="HOGENOM" id="CLU_074944_0_0_6"/>
<dbReference type="UniPathway" id="UPA00345"/>
<dbReference type="GO" id="GO:0005737">
    <property type="term" value="C:cytoplasm"/>
    <property type="evidence" value="ECO:0007669"/>
    <property type="project" value="UniProtKB-SubCell"/>
</dbReference>
<dbReference type="GO" id="GO:0003746">
    <property type="term" value="F:translation elongation factor activity"/>
    <property type="evidence" value="ECO:0007669"/>
    <property type="project" value="UniProtKB-UniRule"/>
</dbReference>
<dbReference type="GO" id="GO:0043043">
    <property type="term" value="P:peptide biosynthetic process"/>
    <property type="evidence" value="ECO:0007669"/>
    <property type="project" value="InterPro"/>
</dbReference>
<dbReference type="CDD" id="cd04470">
    <property type="entry name" value="S1_EF-P_repeat_1"/>
    <property type="match status" value="1"/>
</dbReference>
<dbReference type="CDD" id="cd05794">
    <property type="entry name" value="S1_EF-P_repeat_2"/>
    <property type="match status" value="1"/>
</dbReference>
<dbReference type="FunFam" id="2.30.30.30:FF:000003">
    <property type="entry name" value="Elongation factor P"/>
    <property type="match status" value="1"/>
</dbReference>
<dbReference type="FunFam" id="2.40.50.140:FF:000004">
    <property type="entry name" value="Elongation factor P"/>
    <property type="match status" value="1"/>
</dbReference>
<dbReference type="FunFam" id="2.40.50.140:FF:000009">
    <property type="entry name" value="Elongation factor P"/>
    <property type="match status" value="1"/>
</dbReference>
<dbReference type="Gene3D" id="2.30.30.30">
    <property type="match status" value="1"/>
</dbReference>
<dbReference type="Gene3D" id="2.40.50.140">
    <property type="entry name" value="Nucleic acid-binding proteins"/>
    <property type="match status" value="2"/>
</dbReference>
<dbReference type="HAMAP" id="MF_00141">
    <property type="entry name" value="EF_P"/>
    <property type="match status" value="1"/>
</dbReference>
<dbReference type="InterPro" id="IPR015365">
    <property type="entry name" value="Elong-fact-P_C"/>
</dbReference>
<dbReference type="InterPro" id="IPR012340">
    <property type="entry name" value="NA-bd_OB-fold"/>
</dbReference>
<dbReference type="InterPro" id="IPR014722">
    <property type="entry name" value="Rib_uL2_dom2"/>
</dbReference>
<dbReference type="InterPro" id="IPR020599">
    <property type="entry name" value="Transl_elong_fac_P/YeiP"/>
</dbReference>
<dbReference type="InterPro" id="IPR013185">
    <property type="entry name" value="Transl_elong_KOW-like"/>
</dbReference>
<dbReference type="InterPro" id="IPR001059">
    <property type="entry name" value="Transl_elong_P/YeiP_cen"/>
</dbReference>
<dbReference type="InterPro" id="IPR013852">
    <property type="entry name" value="Transl_elong_P/YeiP_CS"/>
</dbReference>
<dbReference type="InterPro" id="IPR011768">
    <property type="entry name" value="Transl_elongation_fac_P"/>
</dbReference>
<dbReference type="InterPro" id="IPR008991">
    <property type="entry name" value="Translation_prot_SH3-like_sf"/>
</dbReference>
<dbReference type="NCBIfam" id="TIGR00038">
    <property type="entry name" value="efp"/>
    <property type="match status" value="1"/>
</dbReference>
<dbReference type="NCBIfam" id="NF001810">
    <property type="entry name" value="PRK00529.1"/>
    <property type="match status" value="1"/>
</dbReference>
<dbReference type="PANTHER" id="PTHR30053">
    <property type="entry name" value="ELONGATION FACTOR P"/>
    <property type="match status" value="1"/>
</dbReference>
<dbReference type="PANTHER" id="PTHR30053:SF12">
    <property type="entry name" value="ELONGATION FACTOR P (EF-P) FAMILY PROTEIN"/>
    <property type="match status" value="1"/>
</dbReference>
<dbReference type="Pfam" id="PF01132">
    <property type="entry name" value="EFP"/>
    <property type="match status" value="1"/>
</dbReference>
<dbReference type="Pfam" id="PF08207">
    <property type="entry name" value="EFP_N"/>
    <property type="match status" value="1"/>
</dbReference>
<dbReference type="Pfam" id="PF09285">
    <property type="entry name" value="Elong-fact-P_C"/>
    <property type="match status" value="1"/>
</dbReference>
<dbReference type="PIRSF" id="PIRSF005901">
    <property type="entry name" value="EF-P"/>
    <property type="match status" value="1"/>
</dbReference>
<dbReference type="SMART" id="SM01185">
    <property type="entry name" value="EFP"/>
    <property type="match status" value="1"/>
</dbReference>
<dbReference type="SMART" id="SM00841">
    <property type="entry name" value="Elong-fact-P_C"/>
    <property type="match status" value="1"/>
</dbReference>
<dbReference type="SUPFAM" id="SSF50249">
    <property type="entry name" value="Nucleic acid-binding proteins"/>
    <property type="match status" value="2"/>
</dbReference>
<dbReference type="SUPFAM" id="SSF50104">
    <property type="entry name" value="Translation proteins SH3-like domain"/>
    <property type="match status" value="1"/>
</dbReference>
<dbReference type="PROSITE" id="PS01275">
    <property type="entry name" value="EFP"/>
    <property type="match status" value="1"/>
</dbReference>
<proteinExistence type="inferred from homology"/>
<keyword id="KW-0963">Cytoplasm</keyword>
<keyword id="KW-0251">Elongation factor</keyword>
<keyword id="KW-0379">Hydroxylation</keyword>
<keyword id="KW-0648">Protein biosynthesis</keyword>
<gene>
    <name evidence="1" type="primary">efp</name>
    <name type="ordered locus">CbuG_0189</name>
</gene>
<accession>B6J307</accession>
<sequence>MATHSTNEFRGGLKVMVDGDPCSIIDNEFVKPGKGQAFNRVKFRNLKTGRVLERTFKSGETLPAADVVEVEMQYLYNDGEFWHFMTSENYEQHAASKEAVAEAKQWLKEEALCMVTMWNGVPLSVEPPNFVELKITETEPGVRGDTATGGTKRAKLETGAVVRVPLFLNEGEIIKVDTRRGEYVSRAK</sequence>
<evidence type="ECO:0000255" key="1">
    <source>
        <dbReference type="HAMAP-Rule" id="MF_00141"/>
    </source>
</evidence>
<protein>
    <recommendedName>
        <fullName evidence="1">Elongation factor P</fullName>
        <shortName evidence="1">EF-P</shortName>
    </recommendedName>
</protein>